<name>EFTU_MYCBP</name>
<keyword id="KW-0963">Cytoplasm</keyword>
<keyword id="KW-0251">Elongation factor</keyword>
<keyword id="KW-0342">GTP-binding</keyword>
<keyword id="KW-0378">Hydrolase</keyword>
<keyword id="KW-0460">Magnesium</keyword>
<keyword id="KW-0479">Metal-binding</keyword>
<keyword id="KW-0547">Nucleotide-binding</keyword>
<keyword id="KW-0648">Protein biosynthesis</keyword>
<evidence type="ECO:0000250" key="1"/>
<evidence type="ECO:0000255" key="2">
    <source>
        <dbReference type="HAMAP-Rule" id="MF_00118"/>
    </source>
</evidence>
<sequence>MAKAKFQRTKPHVNIGTIGHVDHGKTTLTAAITKVLHDKFPDLNETKAFDQIDNAPEERQRGITINIAHVEYQTDKRHYAHVDAPGHADYIKNMITGAAQMDGAILVVAATDGPMPQTREHVLLARQVGVPYILVALNKADAVDDEELLELVEMEVRELLAAQEFDEDAPVVRVSALKALEGDAKWVASVEELMNAVDESIPDPVRETDKPFLMPVEDVFTITGRGTVVTGRVERGVINVNEEVEIVGIRPSTTKTTVTGVEMFRKLLDQGQAGDNVGLLLRGVKREDVERGQVVTKPGTTTPHTEFEGQVYILSKDEGGRHTPFFNNYRPQFYFRTTDVTGVVTLPEGTEMVMPGDNTNISVKLIQPVAMDEGLRFAIREGGRTVGAGRVTKIIK</sequence>
<feature type="chain" id="PRO_1000015697" description="Elongation factor Tu">
    <location>
        <begin position="1"/>
        <end position="396"/>
    </location>
</feature>
<feature type="domain" description="tr-type G">
    <location>
        <begin position="10"/>
        <end position="205"/>
    </location>
</feature>
<feature type="region of interest" description="G1" evidence="1">
    <location>
        <begin position="19"/>
        <end position="26"/>
    </location>
</feature>
<feature type="region of interest" description="G2" evidence="1">
    <location>
        <begin position="62"/>
        <end position="66"/>
    </location>
</feature>
<feature type="region of interest" description="G3" evidence="1">
    <location>
        <begin position="83"/>
        <end position="86"/>
    </location>
</feature>
<feature type="region of interest" description="G4" evidence="1">
    <location>
        <begin position="138"/>
        <end position="141"/>
    </location>
</feature>
<feature type="region of interest" description="G5" evidence="1">
    <location>
        <begin position="175"/>
        <end position="177"/>
    </location>
</feature>
<feature type="binding site" evidence="2">
    <location>
        <begin position="19"/>
        <end position="26"/>
    </location>
    <ligand>
        <name>GTP</name>
        <dbReference type="ChEBI" id="CHEBI:37565"/>
    </ligand>
</feature>
<feature type="binding site" evidence="2">
    <location>
        <position position="26"/>
    </location>
    <ligand>
        <name>Mg(2+)</name>
        <dbReference type="ChEBI" id="CHEBI:18420"/>
    </ligand>
</feature>
<feature type="binding site" evidence="2">
    <location>
        <begin position="83"/>
        <end position="87"/>
    </location>
    <ligand>
        <name>GTP</name>
        <dbReference type="ChEBI" id="CHEBI:37565"/>
    </ligand>
</feature>
<feature type="binding site" evidence="2">
    <location>
        <begin position="138"/>
        <end position="141"/>
    </location>
    <ligand>
        <name>GTP</name>
        <dbReference type="ChEBI" id="CHEBI:37565"/>
    </ligand>
</feature>
<organism>
    <name type="scientific">Mycobacterium bovis (strain BCG / Pasteur 1173P2)</name>
    <dbReference type="NCBI Taxonomy" id="410289"/>
    <lineage>
        <taxon>Bacteria</taxon>
        <taxon>Bacillati</taxon>
        <taxon>Actinomycetota</taxon>
        <taxon>Actinomycetes</taxon>
        <taxon>Mycobacteriales</taxon>
        <taxon>Mycobacteriaceae</taxon>
        <taxon>Mycobacterium</taxon>
        <taxon>Mycobacterium tuberculosis complex</taxon>
    </lineage>
</organism>
<dbReference type="EC" id="3.6.5.3" evidence="2"/>
<dbReference type="EMBL" id="AM408590">
    <property type="protein sequence ID" value="CAL70720.1"/>
    <property type="molecule type" value="Genomic_DNA"/>
</dbReference>
<dbReference type="RefSeq" id="WP_003403463.1">
    <property type="nucleotide sequence ID" value="NC_008769.1"/>
</dbReference>
<dbReference type="SMR" id="A1KGG5"/>
<dbReference type="GeneID" id="45424647"/>
<dbReference type="KEGG" id="mbb:BCG_0734"/>
<dbReference type="HOGENOM" id="CLU_007265_0_1_11"/>
<dbReference type="Proteomes" id="UP000001472">
    <property type="component" value="Chromosome"/>
</dbReference>
<dbReference type="GO" id="GO:0005829">
    <property type="term" value="C:cytosol"/>
    <property type="evidence" value="ECO:0007669"/>
    <property type="project" value="TreeGrafter"/>
</dbReference>
<dbReference type="GO" id="GO:0005525">
    <property type="term" value="F:GTP binding"/>
    <property type="evidence" value="ECO:0007669"/>
    <property type="project" value="UniProtKB-UniRule"/>
</dbReference>
<dbReference type="GO" id="GO:0003924">
    <property type="term" value="F:GTPase activity"/>
    <property type="evidence" value="ECO:0007669"/>
    <property type="project" value="InterPro"/>
</dbReference>
<dbReference type="GO" id="GO:0003746">
    <property type="term" value="F:translation elongation factor activity"/>
    <property type="evidence" value="ECO:0007669"/>
    <property type="project" value="UniProtKB-UniRule"/>
</dbReference>
<dbReference type="CDD" id="cd01884">
    <property type="entry name" value="EF_Tu"/>
    <property type="match status" value="1"/>
</dbReference>
<dbReference type="CDD" id="cd03697">
    <property type="entry name" value="EFTU_II"/>
    <property type="match status" value="1"/>
</dbReference>
<dbReference type="CDD" id="cd03707">
    <property type="entry name" value="EFTU_III"/>
    <property type="match status" value="1"/>
</dbReference>
<dbReference type="FunFam" id="2.40.30.10:FF:000001">
    <property type="entry name" value="Elongation factor Tu"/>
    <property type="match status" value="1"/>
</dbReference>
<dbReference type="FunFam" id="3.40.50.300:FF:000003">
    <property type="entry name" value="Elongation factor Tu"/>
    <property type="match status" value="1"/>
</dbReference>
<dbReference type="Gene3D" id="3.40.50.300">
    <property type="entry name" value="P-loop containing nucleotide triphosphate hydrolases"/>
    <property type="match status" value="1"/>
</dbReference>
<dbReference type="Gene3D" id="2.40.30.10">
    <property type="entry name" value="Translation factors"/>
    <property type="match status" value="2"/>
</dbReference>
<dbReference type="HAMAP" id="MF_00118_B">
    <property type="entry name" value="EF_Tu_B"/>
    <property type="match status" value="1"/>
</dbReference>
<dbReference type="InterPro" id="IPR041709">
    <property type="entry name" value="EF-Tu_GTP-bd"/>
</dbReference>
<dbReference type="InterPro" id="IPR050055">
    <property type="entry name" value="EF-Tu_GTPase"/>
</dbReference>
<dbReference type="InterPro" id="IPR004161">
    <property type="entry name" value="EFTu-like_2"/>
</dbReference>
<dbReference type="InterPro" id="IPR033720">
    <property type="entry name" value="EFTU_2"/>
</dbReference>
<dbReference type="InterPro" id="IPR031157">
    <property type="entry name" value="G_TR_CS"/>
</dbReference>
<dbReference type="InterPro" id="IPR027417">
    <property type="entry name" value="P-loop_NTPase"/>
</dbReference>
<dbReference type="InterPro" id="IPR005225">
    <property type="entry name" value="Small_GTP-bd"/>
</dbReference>
<dbReference type="InterPro" id="IPR000795">
    <property type="entry name" value="T_Tr_GTP-bd_dom"/>
</dbReference>
<dbReference type="InterPro" id="IPR009000">
    <property type="entry name" value="Transl_B-barrel_sf"/>
</dbReference>
<dbReference type="InterPro" id="IPR009001">
    <property type="entry name" value="Transl_elong_EF1A/Init_IF2_C"/>
</dbReference>
<dbReference type="InterPro" id="IPR004541">
    <property type="entry name" value="Transl_elong_EFTu/EF1A_bac/org"/>
</dbReference>
<dbReference type="InterPro" id="IPR004160">
    <property type="entry name" value="Transl_elong_EFTu/EF1A_C"/>
</dbReference>
<dbReference type="NCBIfam" id="TIGR00485">
    <property type="entry name" value="EF-Tu"/>
    <property type="match status" value="1"/>
</dbReference>
<dbReference type="NCBIfam" id="NF000766">
    <property type="entry name" value="PRK00049.1"/>
    <property type="match status" value="1"/>
</dbReference>
<dbReference type="NCBIfam" id="NF009372">
    <property type="entry name" value="PRK12735.1"/>
    <property type="match status" value="1"/>
</dbReference>
<dbReference type="NCBIfam" id="NF009373">
    <property type="entry name" value="PRK12736.1"/>
    <property type="match status" value="1"/>
</dbReference>
<dbReference type="NCBIfam" id="TIGR00231">
    <property type="entry name" value="small_GTP"/>
    <property type="match status" value="1"/>
</dbReference>
<dbReference type="PANTHER" id="PTHR43721:SF22">
    <property type="entry name" value="ELONGATION FACTOR TU, MITOCHONDRIAL"/>
    <property type="match status" value="1"/>
</dbReference>
<dbReference type="PANTHER" id="PTHR43721">
    <property type="entry name" value="ELONGATION FACTOR TU-RELATED"/>
    <property type="match status" value="1"/>
</dbReference>
<dbReference type="Pfam" id="PF00009">
    <property type="entry name" value="GTP_EFTU"/>
    <property type="match status" value="1"/>
</dbReference>
<dbReference type="Pfam" id="PF03144">
    <property type="entry name" value="GTP_EFTU_D2"/>
    <property type="match status" value="1"/>
</dbReference>
<dbReference type="Pfam" id="PF03143">
    <property type="entry name" value="GTP_EFTU_D3"/>
    <property type="match status" value="1"/>
</dbReference>
<dbReference type="PRINTS" id="PR00315">
    <property type="entry name" value="ELONGATNFCT"/>
</dbReference>
<dbReference type="SUPFAM" id="SSF50465">
    <property type="entry name" value="EF-Tu/eEF-1alpha/eIF2-gamma C-terminal domain"/>
    <property type="match status" value="1"/>
</dbReference>
<dbReference type="SUPFAM" id="SSF52540">
    <property type="entry name" value="P-loop containing nucleoside triphosphate hydrolases"/>
    <property type="match status" value="1"/>
</dbReference>
<dbReference type="SUPFAM" id="SSF50447">
    <property type="entry name" value="Translation proteins"/>
    <property type="match status" value="1"/>
</dbReference>
<dbReference type="PROSITE" id="PS00301">
    <property type="entry name" value="G_TR_1"/>
    <property type="match status" value="1"/>
</dbReference>
<dbReference type="PROSITE" id="PS51722">
    <property type="entry name" value="G_TR_2"/>
    <property type="match status" value="1"/>
</dbReference>
<protein>
    <recommendedName>
        <fullName evidence="2">Elongation factor Tu</fullName>
        <shortName evidence="2">EF-Tu</shortName>
        <ecNumber evidence="2">3.6.5.3</ecNumber>
    </recommendedName>
</protein>
<accession>A1KGG5</accession>
<gene>
    <name evidence="2" type="primary">tuf</name>
    <name type="ordered locus">BCG_0734</name>
</gene>
<comment type="function">
    <text evidence="2">GTP hydrolase that promotes the GTP-dependent binding of aminoacyl-tRNA to the A-site of ribosomes during protein biosynthesis.</text>
</comment>
<comment type="catalytic activity">
    <reaction evidence="2">
        <text>GTP + H2O = GDP + phosphate + H(+)</text>
        <dbReference type="Rhea" id="RHEA:19669"/>
        <dbReference type="ChEBI" id="CHEBI:15377"/>
        <dbReference type="ChEBI" id="CHEBI:15378"/>
        <dbReference type="ChEBI" id="CHEBI:37565"/>
        <dbReference type="ChEBI" id="CHEBI:43474"/>
        <dbReference type="ChEBI" id="CHEBI:58189"/>
        <dbReference type="EC" id="3.6.5.3"/>
    </reaction>
    <physiologicalReaction direction="left-to-right" evidence="2">
        <dbReference type="Rhea" id="RHEA:19670"/>
    </physiologicalReaction>
</comment>
<comment type="subunit">
    <text evidence="2">Monomer.</text>
</comment>
<comment type="subcellular location">
    <subcellularLocation>
        <location evidence="2">Cytoplasm</location>
    </subcellularLocation>
</comment>
<comment type="similarity">
    <text evidence="2">Belongs to the TRAFAC class translation factor GTPase superfamily. Classic translation factor GTPase family. EF-Tu/EF-1A subfamily.</text>
</comment>
<proteinExistence type="inferred from homology"/>
<reference key="1">
    <citation type="journal article" date="2007" name="Proc. Natl. Acad. Sci. U.S.A.">
        <title>Genome plasticity of BCG and impact on vaccine efficacy.</title>
        <authorList>
            <person name="Brosch R."/>
            <person name="Gordon S.V."/>
            <person name="Garnier T."/>
            <person name="Eiglmeier K."/>
            <person name="Frigui W."/>
            <person name="Valenti P."/>
            <person name="Dos Santos S."/>
            <person name="Duthoy S."/>
            <person name="Lacroix C."/>
            <person name="Garcia-Pelayo C."/>
            <person name="Inwald J.K."/>
            <person name="Golby P."/>
            <person name="Garcia J.N."/>
            <person name="Hewinson R.G."/>
            <person name="Behr M.A."/>
            <person name="Quail M.A."/>
            <person name="Churcher C."/>
            <person name="Barrell B.G."/>
            <person name="Parkhill J."/>
            <person name="Cole S.T."/>
        </authorList>
    </citation>
    <scope>NUCLEOTIDE SEQUENCE [LARGE SCALE GENOMIC DNA]</scope>
    <source>
        <strain>BCG / Pasteur 1173P2</strain>
    </source>
</reference>